<organism>
    <name type="scientific">Anemonia viridis</name>
    <name type="common">Snakelocks anemone</name>
    <dbReference type="NCBI Taxonomy" id="51769"/>
    <lineage>
        <taxon>Eukaryota</taxon>
        <taxon>Metazoa</taxon>
        <taxon>Cnidaria</taxon>
        <taxon>Anthozoa</taxon>
        <taxon>Hexacorallia</taxon>
        <taxon>Actiniaria</taxon>
        <taxon>Actiniidae</taxon>
        <taxon>Anemonia</taxon>
    </lineage>
</organism>
<proteinExistence type="evidence at transcript level"/>
<keyword id="KW-0165">Cleavage on pair of basic residues</keyword>
<keyword id="KW-1015">Disulfide bond</keyword>
<keyword id="KW-0872">Ion channel impairing toxin</keyword>
<keyword id="KW-0166">Nematocyst</keyword>
<keyword id="KW-0528">Neurotoxin</keyword>
<keyword id="KW-0964">Secreted</keyword>
<keyword id="KW-0732">Signal</keyword>
<keyword id="KW-0800">Toxin</keyword>
<keyword id="KW-0738">Voltage-gated sodium channel impairing toxin</keyword>
<dbReference type="EMBL" id="EU124452">
    <property type="protein sequence ID" value="ABW97331.1"/>
    <property type="molecule type" value="Genomic_DNA"/>
</dbReference>
<dbReference type="SMR" id="P0DL54"/>
<dbReference type="GO" id="GO:0005576">
    <property type="term" value="C:extracellular region"/>
    <property type="evidence" value="ECO:0007669"/>
    <property type="project" value="UniProtKB-SubCell"/>
</dbReference>
<dbReference type="GO" id="GO:0042151">
    <property type="term" value="C:nematocyst"/>
    <property type="evidence" value="ECO:0007669"/>
    <property type="project" value="UniProtKB-SubCell"/>
</dbReference>
<dbReference type="GO" id="GO:0017080">
    <property type="term" value="F:sodium channel regulator activity"/>
    <property type="evidence" value="ECO:0007669"/>
    <property type="project" value="UniProtKB-KW"/>
</dbReference>
<dbReference type="GO" id="GO:0090729">
    <property type="term" value="F:toxin activity"/>
    <property type="evidence" value="ECO:0007669"/>
    <property type="project" value="UniProtKB-KW"/>
</dbReference>
<dbReference type="Gene3D" id="2.20.20.10">
    <property type="entry name" value="Anthopleurin-A"/>
    <property type="match status" value="1"/>
</dbReference>
<dbReference type="InterPro" id="IPR023355">
    <property type="entry name" value="Myo_ane_neurotoxin_sf"/>
</dbReference>
<dbReference type="Pfam" id="PF00706">
    <property type="entry name" value="Toxin_4"/>
    <property type="match status" value="1"/>
</dbReference>
<dbReference type="SUPFAM" id="SSF57392">
    <property type="entry name" value="Defensin-like"/>
    <property type="match status" value="1"/>
</dbReference>
<comment type="function">
    <text evidence="1 4 5">Binds specifically to voltage-gated sodium channels (Nav) (site 3), thereby delaying their inactivation during signal transduction (PubMed:19609479). Has a strong effect on crustaceans and insects and a weaker effect on mammals (By similarity). It strongly inhibits D.melanogaster sodium channel (DmNav1) (PubMed:19609479). It strongly affects the heart sodium channels (Nav1.5/SCN5A) and weakly inhibits the brain sodium channel Nav1.2/SCN2A (By similarity). In vivo, when released into the medium, this recombinant toxin induces impaired swimming, paralysis and death of the crustacean A.nauplii within several hours (PubMed:22048953). Its effect on zebrafish (D.rerio) larvae is much faster, since it induces paralysis or strong convulsion and impaired swimming, within 10 minutes (PubMed:22048953).</text>
</comment>
<comment type="subcellular location">
    <subcellularLocation>
        <location evidence="9">Secreted</location>
    </subcellularLocation>
    <subcellularLocation>
        <location evidence="9">Nematocyst</location>
    </subcellularLocation>
    <text evidence="9">In nematocyst, is associated with the tubule prior to discharge.</text>
</comment>
<comment type="tissue specificity">
    <text evidence="9">Expressed in gland cells and nematocytes.</text>
</comment>
<comment type="miscellaneous">
    <text evidence="3">This protein is encoded by at least 3 different genes. At least 3 other genes code for a similar Av2 with a Val (instead an Ile) at position 35.</text>
</comment>
<comment type="similarity">
    <text evidence="8">Belongs to the sea anemone sodium channel inhibitory toxin family. Type I subfamily.</text>
</comment>
<comment type="caution">
    <text evidence="8">Opinions are divided on whether Anemonia viridis (Forsskal, 1775) and Anemonia sulcata (Pennant, 1777) are separate species.</text>
</comment>
<feature type="signal peptide" evidence="2">
    <location>
        <begin position="1"/>
        <end position="21"/>
    </location>
</feature>
<feature type="propeptide" id="PRO_0000433684" evidence="1">
    <location>
        <begin position="22"/>
        <end position="31"/>
    </location>
</feature>
<feature type="chain" id="PRO_0000433797" description="Delta-actitoxin-Avd1e 3">
    <location>
        <begin position="34"/>
        <end position="80"/>
    </location>
</feature>
<feature type="disulfide bond" evidence="1">
    <location>
        <begin position="37"/>
        <end position="77"/>
    </location>
</feature>
<feature type="disulfide bond" evidence="1">
    <location>
        <begin position="39"/>
        <end position="67"/>
    </location>
</feature>
<feature type="disulfide bond" evidence="1">
    <location>
        <begin position="60"/>
        <end position="78"/>
    </location>
</feature>
<sequence length="80" mass="8677">MMNRLLVFLMLGAAFMLVVSAIDQDANEDINKRGIPCLCDSDGPSVRGNTLSGIIWLAGCPSGWHNCKKHGPTIGWCCKQ</sequence>
<reference key="1">
    <citation type="journal article" date="2008" name="Mol. Biol. Evol.">
        <title>Concerted evolution of sea anemone neurotoxin genes is revealed through analysis of the Nematostella vectensis genome.</title>
        <authorList>
            <person name="Moran Y."/>
            <person name="Weinberger H."/>
            <person name="Sullivan J.C."/>
            <person name="Reitzel A.M."/>
            <person name="Finnerty J.R."/>
            <person name="Gurevitz M."/>
        </authorList>
    </citation>
    <scope>NUCLEOTIDE SEQUENCE [GENOMIC DNA / MRNA]</scope>
</reference>
<reference key="2">
    <citation type="journal article" date="2009" name="J. Mol. Evol.">
        <title>Fusion and retrotransposition events in the evolution of the sea anemone Anemonia viridis neurotoxin genes.</title>
        <authorList>
            <person name="Moran Y."/>
            <person name="Weinberger H."/>
            <person name="Lazarus N."/>
            <person name="Gur M."/>
            <person name="Kahn R."/>
            <person name="Gordon D."/>
            <person name="Gurevitz M."/>
        </authorList>
    </citation>
    <scope>FUNCTION</scope>
    <scope>RECOMBINANT EXPRESSION</scope>
</reference>
<reference key="3">
    <citation type="journal article" date="2012" name="Proc. R. Soc. B">
        <title>Neurotoxin localization to ectodermal gland cells uncovers an alternative mechanism of venom delivery in sea anemones.</title>
        <authorList>
            <person name="Moran Y."/>
            <person name="Genikhovich G."/>
            <person name="Gordon D."/>
            <person name="Wienkoop S."/>
            <person name="Zenkert C."/>
            <person name="Ozbek S."/>
            <person name="Technau U."/>
            <person name="Gurevitz M."/>
        </authorList>
    </citation>
    <scope>FUNCTION</scope>
    <scope>SUBCELLULAR LOCATION</scope>
    <scope>TISSUE SPECIFICITY</scope>
    <scope>MUTAGENESIS OF LEU-38</scope>
</reference>
<reference key="4">
    <citation type="journal article" date="2012" name="Toxicon">
        <title>Development of a rational nomenclature for naming peptide and protein toxins from sea anemones.</title>
        <authorList>
            <person name="Oliveira J.S."/>
            <person name="Fuentes-Silva D."/>
            <person name="King G.F."/>
        </authorList>
    </citation>
    <scope>NOMENCLATURE</scope>
</reference>
<protein>
    <recommendedName>
        <fullName evidence="7">Delta-actitoxin-Avd1e 3</fullName>
        <shortName evidence="7">Delta-AITX-Avd1e 3</shortName>
    </recommendedName>
    <alternativeName>
        <fullName evidence="10">ATX-II</fullName>
    </alternativeName>
    <alternativeName>
        <fullName evidence="6">Av2</fullName>
    </alternativeName>
    <alternativeName>
        <fullName evidence="10">Toxin 2-6</fullName>
    </alternativeName>
</protein>
<accession>P0DL54</accession>
<accession>B1NWR3</accession>
<name>NA126_ANEVI</name>
<evidence type="ECO:0000250" key="1">
    <source>
        <dbReference type="UniProtKB" id="P01528"/>
    </source>
</evidence>
<evidence type="ECO:0000255" key="2"/>
<evidence type="ECO:0000269" key="3">
    <source>
    </source>
</evidence>
<evidence type="ECO:0000269" key="4">
    <source>
    </source>
</evidence>
<evidence type="ECO:0000269" key="5">
    <source>
    </source>
</evidence>
<evidence type="ECO:0000303" key="6">
    <source>
    </source>
</evidence>
<evidence type="ECO:0000303" key="7">
    <source>
    </source>
</evidence>
<evidence type="ECO:0000305" key="8"/>
<evidence type="ECO:0000305" key="9">
    <source>
    </source>
</evidence>
<evidence type="ECO:0000312" key="10">
    <source>
        <dbReference type="EMBL" id="ABW97331.1"/>
    </source>
</evidence>